<accession>Q8M9W5</accession>
<comment type="function">
    <text evidence="1">One of the components of the core complex of photosystem II (PSII). It binds chlorophyll and helps catalyze the primary light-induced photochemical processes of PSII. PSII is a light-driven water:plastoquinone oxidoreductase, using light energy to abstract electrons from H(2)O, generating O(2) and a proton gradient subsequently used for ATP formation.</text>
</comment>
<comment type="cofactor">
    <text evidence="1">Binds multiple chlorophylls and provides some of the ligands for the Ca-4Mn-5O cluster of the oxygen-evolving complex. It may also provide a ligand for a Cl- that is required for oxygen evolution. PSII binds additional chlorophylls, carotenoids and specific lipids.</text>
</comment>
<comment type="subunit">
    <text evidence="1">PSII is composed of 1 copy each of membrane proteins PsbA, PsbB, PsbC, PsbD, PsbE, PsbF, PsbH, PsbI, PsbJ, PsbK, PsbL, PsbM, PsbT, PsbX, PsbY, PsbZ, Psb30/Ycf12, at least 3 peripheral proteins of the oxygen-evolving complex and a large number of cofactors. It forms dimeric complexes.</text>
</comment>
<comment type="subcellular location">
    <subcellularLocation>
        <location evidence="1">Plastid</location>
        <location evidence="1">Chloroplast thylakoid membrane</location>
        <topology evidence="1">Multi-pass membrane protein</topology>
    </subcellularLocation>
</comment>
<comment type="similarity">
    <text evidence="1">Belongs to the PsbB/PsbC family. PsbC subfamily.</text>
</comment>
<comment type="sequence caution" evidence="2">
    <conflict type="erroneous initiation">
        <sequence resource="EMBL-CDS" id="AAM96540"/>
    </conflict>
    <text>Extended N-terminus.</text>
</comment>
<evidence type="ECO:0000255" key="1">
    <source>
        <dbReference type="HAMAP-Rule" id="MF_01496"/>
    </source>
</evidence>
<evidence type="ECO:0000305" key="2"/>
<proteinExistence type="inferred from homology"/>
<gene>
    <name evidence="1" type="primary">psbC</name>
</gene>
<reference key="1">
    <citation type="journal article" date="2002" name="Proc. Natl. Acad. Sci. U.S.A.">
        <title>The chloroplast and mitochondrial genome sequences of the charophyte Chaetosphaeridium globosum: insights into the timing of the events that restructured organelle DNAs within the green algal lineage that led to land plants.</title>
        <authorList>
            <person name="Turmel M."/>
            <person name="Otis C."/>
            <person name="Lemieux C."/>
        </authorList>
    </citation>
    <scope>NUCLEOTIDE SEQUENCE [LARGE SCALE GENOMIC DNA]</scope>
    <source>
        <strain>M1311</strain>
    </source>
</reference>
<protein>
    <recommendedName>
        <fullName evidence="1">Photosystem II CP43 reaction center protein</fullName>
    </recommendedName>
    <alternativeName>
        <fullName evidence="1">PSII 43 kDa protein</fullName>
    </alternativeName>
    <alternativeName>
        <fullName evidence="1">Protein CP-43</fullName>
    </alternativeName>
</protein>
<sequence length="473" mass="51902">MKTLYSPRRYYPVETLFNGTLSVGGRDQETTGFAWWAGNARLINLSGKLLGAHVAHAGLIVFWAGAMNLFEVAHFVPEKPMYEQGLILLPHLASLGWGVGPGGEVIDTFPYFVSGVLHVISSAVLGFGGVYHAIIGPETLEESFPFFGYVWKDKNKMTTILGIHLVLLGFGALLLVAKAVWFGGVYDTWAPGGGDVRVITNPTYDPSIIFGYLLKSPFGGEGWITSVDNMEDIIGGHIWIGFICIFGGIWHIVTKPFAWARRAFVWSGEAYLSYSLGAISAMGFIACCFVWFNNTAYPSEFYGPTGPEASQAQAFTFLVRDQRLGANIGSAQGPTGLGKYLMRSPTGEIIFGGETMRFWDLRAPWLEPLRGPNGLDLSKLKKDIQPWQERRSAEYMTHAPLGSLNSVGGVATEINAVNYVSPRSWLSTSHFVLGFFFFVAHLWHAGRARAAAAGFEKGIERETEPVLFMSPLD</sequence>
<organism>
    <name type="scientific">Chaetosphaeridium globosum</name>
    <name type="common">Charophycean green alga</name>
    <name type="synonym">Herposteiron globosum</name>
    <dbReference type="NCBI Taxonomy" id="96477"/>
    <lineage>
        <taxon>Eukaryota</taxon>
        <taxon>Viridiplantae</taxon>
        <taxon>Streptophyta</taxon>
        <taxon>Coleochaetophyceae</taxon>
        <taxon>Coleochaetales</taxon>
        <taxon>Chaetosphaeridiaceae</taxon>
        <taxon>Chaetosphaeridium</taxon>
    </lineage>
</organism>
<geneLocation type="chloroplast"/>
<dbReference type="EMBL" id="AF494278">
    <property type="protein sequence ID" value="AAM96540.1"/>
    <property type="status" value="ALT_INIT"/>
    <property type="molecule type" value="Genomic_DNA"/>
</dbReference>
<dbReference type="RefSeq" id="NP_683824.3">
    <property type="nucleotide sequence ID" value="NC_004115.1"/>
</dbReference>
<dbReference type="SMR" id="Q8M9W5"/>
<dbReference type="GeneID" id="860696"/>
<dbReference type="GO" id="GO:0009535">
    <property type="term" value="C:chloroplast thylakoid membrane"/>
    <property type="evidence" value="ECO:0007669"/>
    <property type="project" value="UniProtKB-SubCell"/>
</dbReference>
<dbReference type="GO" id="GO:0009523">
    <property type="term" value="C:photosystem II"/>
    <property type="evidence" value="ECO:0007669"/>
    <property type="project" value="UniProtKB-KW"/>
</dbReference>
<dbReference type="GO" id="GO:0016168">
    <property type="term" value="F:chlorophyll binding"/>
    <property type="evidence" value="ECO:0007669"/>
    <property type="project" value="UniProtKB-UniRule"/>
</dbReference>
<dbReference type="GO" id="GO:0045156">
    <property type="term" value="F:electron transporter, transferring electrons within the cyclic electron transport pathway of photosynthesis activity"/>
    <property type="evidence" value="ECO:0007669"/>
    <property type="project" value="InterPro"/>
</dbReference>
<dbReference type="GO" id="GO:0046872">
    <property type="term" value="F:metal ion binding"/>
    <property type="evidence" value="ECO:0007669"/>
    <property type="project" value="UniProtKB-KW"/>
</dbReference>
<dbReference type="GO" id="GO:0009772">
    <property type="term" value="P:photosynthetic electron transport in photosystem II"/>
    <property type="evidence" value="ECO:0007669"/>
    <property type="project" value="InterPro"/>
</dbReference>
<dbReference type="FunFam" id="1.10.10.670:FF:000001">
    <property type="entry name" value="Photosystem II CP43 reaction center protein"/>
    <property type="match status" value="1"/>
</dbReference>
<dbReference type="Gene3D" id="1.10.10.670">
    <property type="entry name" value="photosystem ii from thermosynechococcus elongatus"/>
    <property type="match status" value="1"/>
</dbReference>
<dbReference type="HAMAP" id="MF_01496">
    <property type="entry name" value="PSII_PsbC_CP43"/>
    <property type="match status" value="1"/>
</dbReference>
<dbReference type="InterPro" id="IPR000932">
    <property type="entry name" value="PS_antenna-like"/>
</dbReference>
<dbReference type="InterPro" id="IPR036001">
    <property type="entry name" value="PS_II_antenna-like_sf"/>
</dbReference>
<dbReference type="InterPro" id="IPR005869">
    <property type="entry name" value="PSII_PsbC"/>
</dbReference>
<dbReference type="InterPro" id="IPR044900">
    <property type="entry name" value="PSII_PsbC_sf"/>
</dbReference>
<dbReference type="NCBIfam" id="TIGR01153">
    <property type="entry name" value="psbC"/>
    <property type="match status" value="1"/>
</dbReference>
<dbReference type="Pfam" id="PF00421">
    <property type="entry name" value="PSII"/>
    <property type="match status" value="1"/>
</dbReference>
<dbReference type="SUPFAM" id="SSF161077">
    <property type="entry name" value="Photosystem II antenna protein-like"/>
    <property type="match status" value="1"/>
</dbReference>
<name>PSBC_CHAGL</name>
<keyword id="KW-0007">Acetylation</keyword>
<keyword id="KW-0148">Chlorophyll</keyword>
<keyword id="KW-0150">Chloroplast</keyword>
<keyword id="KW-0157">Chromophore</keyword>
<keyword id="KW-0464">Manganese</keyword>
<keyword id="KW-0472">Membrane</keyword>
<keyword id="KW-0479">Metal-binding</keyword>
<keyword id="KW-0597">Phosphoprotein</keyword>
<keyword id="KW-0602">Photosynthesis</keyword>
<keyword id="KW-0604">Photosystem II</keyword>
<keyword id="KW-0934">Plastid</keyword>
<keyword id="KW-0793">Thylakoid</keyword>
<keyword id="KW-0812">Transmembrane</keyword>
<keyword id="KW-1133">Transmembrane helix</keyword>
<feature type="propeptide" id="PRO_0000431121" evidence="1">
    <location>
        <begin position="1"/>
        <end position="14"/>
    </location>
</feature>
<feature type="chain" id="PRO_0000361339" description="Photosystem II CP43 reaction center protein" evidence="1">
    <location>
        <begin position="15"/>
        <end position="473"/>
    </location>
</feature>
<feature type="transmembrane region" description="Helical" evidence="1">
    <location>
        <begin position="69"/>
        <end position="93"/>
    </location>
</feature>
<feature type="transmembrane region" description="Helical" evidence="1">
    <location>
        <begin position="134"/>
        <end position="155"/>
    </location>
</feature>
<feature type="transmembrane region" description="Helical" evidence="1">
    <location>
        <begin position="178"/>
        <end position="200"/>
    </location>
</feature>
<feature type="transmembrane region" description="Helical" evidence="1">
    <location>
        <begin position="255"/>
        <end position="275"/>
    </location>
</feature>
<feature type="transmembrane region" description="Helical" evidence="1">
    <location>
        <begin position="291"/>
        <end position="312"/>
    </location>
</feature>
<feature type="transmembrane region" description="Helical" evidence="1">
    <location>
        <begin position="447"/>
        <end position="471"/>
    </location>
</feature>
<feature type="binding site" evidence="1">
    <location>
        <position position="367"/>
    </location>
    <ligand>
        <name>[CaMn4O5] cluster</name>
        <dbReference type="ChEBI" id="CHEBI:189552"/>
    </ligand>
</feature>
<feature type="modified residue" description="N-acetylthreonine" evidence="1">
    <location>
        <position position="15"/>
    </location>
</feature>
<feature type="modified residue" description="Phosphothreonine" evidence="1">
    <location>
        <position position="15"/>
    </location>
</feature>